<dbReference type="PIR" id="A32654">
    <property type="entry name" value="A32654"/>
</dbReference>
<dbReference type="GO" id="GO:0005576">
    <property type="term" value="C:extracellular region"/>
    <property type="evidence" value="ECO:0007669"/>
    <property type="project" value="UniProtKB-SubCell"/>
</dbReference>
<dbReference type="GO" id="GO:0007596">
    <property type="term" value="P:blood coagulation"/>
    <property type="evidence" value="ECO:0007669"/>
    <property type="project" value="UniProtKB-KW"/>
</dbReference>
<comment type="function">
    <text evidence="1">Cleaved by the protease thrombin to yield monomers which, together with fibrinogen beta (FGB) and fibrinogen gamma (FGG), polymerize to form an insoluble fibrin matrix. Fibrin has a major function in hemostasis as one of the primary components of blood clots.</text>
</comment>
<comment type="subunit">
    <text evidence="2">Heterohexamer; disulfide linked. Contains 2 sets of 3 non-identical chains (alpha, beta and gamma). The 2 heterotrimers are in head to head conformation with the N-termini in a small central domain (By similarity).</text>
</comment>
<comment type="subcellular location">
    <subcellularLocation>
        <location evidence="2">Secreted</location>
    </subcellularLocation>
</comment>
<comment type="domain">
    <text evidence="2">A long coiled coil structure formed by 3 polypeptide chains connects the central nodule to the C-terminal domains (distal nodules). The long C-terminal ends of the alpha chains fold back, contributing a fourth strand to the coiled coil structure.</text>
</comment>
<comment type="PTM">
    <text>Conversion of fibrinogen to fibrin is triggered by thrombin, which cleaves fibrinopeptides A and B from alpha and beta chains, and thus exposes the N-terminal polymerization sites responsible for the formation of the soft clot. The soft clot is converted into the hard clot by factor XIIIA which catalyzes the epsilon-(gamma-glutamyl)lysine cross-linking between gamma chains (stronger) and between alpha chains (weaker) of different monomers.</text>
</comment>
<comment type="PTM">
    <text>Forms F13A-mediated cross-links between a glutamine and the epsilon-amino group of a lysine residue, forming fibronectin-fibrinogen heteropolymers.</text>
</comment>
<keyword id="KW-0094">Blood coagulation</keyword>
<keyword id="KW-0175">Coiled coil</keyword>
<keyword id="KW-0903">Direct protein sequencing</keyword>
<keyword id="KW-1015">Disulfide bond</keyword>
<keyword id="KW-0356">Hemostasis</keyword>
<keyword id="KW-0964">Secreted</keyword>
<feature type="peptide" id="PRO_0000252047" description="Fibrinopeptide A">
    <location>
        <begin position="1"/>
        <end position="14"/>
    </location>
</feature>
<feature type="non-terminal residue" evidence="3">
    <location>
        <position position="14"/>
    </location>
</feature>
<reference evidence="3 4" key="1">
    <citation type="book" date="1968" name="Chemotaxonomy and serotaxonomy">
        <editorList>
            <person name="Hawkes J.G."/>
        </editorList>
        <authorList>
            <person name="Blombaeck B."/>
            <person name="Blombaeck M."/>
        </authorList>
    </citation>
    <scope>PROTEIN SEQUENCE</scope>
</reference>
<organism>
    <name type="scientific">Tiliqua rugosa</name>
    <name type="common">Shingleback lizard</name>
    <name type="synonym">Trachydosaurus rugosus</name>
    <dbReference type="NCBI Taxonomy" id="8527"/>
    <lineage>
        <taxon>Eukaryota</taxon>
        <taxon>Metazoa</taxon>
        <taxon>Chordata</taxon>
        <taxon>Craniata</taxon>
        <taxon>Vertebrata</taxon>
        <taxon>Euteleostomi</taxon>
        <taxon>Lepidosauria</taxon>
        <taxon>Squamata</taxon>
        <taxon>Bifurcata</taxon>
        <taxon>Unidentata</taxon>
        <taxon>Scinciformata</taxon>
        <taxon>Scincidae</taxon>
        <taxon>Egerniinae</taxon>
        <taxon>Tiliqua</taxon>
    </lineage>
</organism>
<name>FIBA_TILRU</name>
<protein>
    <recommendedName>
        <fullName>Fibrinogen alpha chain</fullName>
    </recommendedName>
    <component>
        <recommendedName>
            <fullName>Fibrinopeptide A</fullName>
        </recommendedName>
    </component>
</protein>
<gene>
    <name evidence="2" type="primary">FGA</name>
</gene>
<evidence type="ECO:0000250" key="1">
    <source>
        <dbReference type="UniProtKB" id="E9PV24"/>
    </source>
</evidence>
<evidence type="ECO:0000250" key="2">
    <source>
        <dbReference type="UniProtKB" id="P02671"/>
    </source>
</evidence>
<evidence type="ECO:0000305" key="3"/>
<evidence type="ECO:0000312" key="4">
    <source>
        <dbReference type="PIR" id="A32654"/>
    </source>
</evidence>
<sequence>EDTGTFEEGHGGVR</sequence>
<accession>Q7LZT3</accession>
<proteinExistence type="evidence at protein level"/>